<sequence length="203" mass="22227">MKLRWFAFLIVLLAGCSSKHDYTNPPWNAKVPVQRAMQWMPISQKAGAAWGVDPQLITAIIAIESGGNPNAVSKSNAIGLMQLKASTSGRDVYRRMGWSGEPTTSELKNPERNISMGAAYLNILETGPLAGIEDPKVLQYALVVSYANGAGALLRTFSSDRKKAISKINDLDADEFLEHVARNHPAPQAPRYIYKLEQALDAM</sequence>
<keyword id="KW-0998">Cell outer membrane</keyword>
<keyword id="KW-0961">Cell wall biogenesis/degradation</keyword>
<keyword id="KW-0449">Lipoprotein</keyword>
<keyword id="KW-0456">Lyase</keyword>
<keyword id="KW-0472">Membrane</keyword>
<keyword id="KW-0564">Palmitate</keyword>
<keyword id="KW-0732">Signal</keyword>
<protein>
    <recommendedName>
        <fullName evidence="1">Endo-type membrane-bound lytic murein transglycosylase A</fullName>
        <ecNumber evidence="1">4.2.2.n2</ecNumber>
    </recommendedName>
    <alternativeName>
        <fullName evidence="1">Peptidoglycan lytic endotransglycosylase</fullName>
    </alternativeName>
</protein>
<dbReference type="EC" id="4.2.2.n2" evidence="1"/>
<dbReference type="EMBL" id="CP000946">
    <property type="protein sequence ID" value="ACA78066.1"/>
    <property type="molecule type" value="Genomic_DNA"/>
</dbReference>
<dbReference type="RefSeq" id="WP_001301104.1">
    <property type="nucleotide sequence ID" value="NZ_MTFT01000016.1"/>
</dbReference>
<dbReference type="SMR" id="B1IU99"/>
<dbReference type="CAZy" id="GH23">
    <property type="family name" value="Glycoside Hydrolase Family 23"/>
</dbReference>
<dbReference type="GeneID" id="93776239"/>
<dbReference type="KEGG" id="ecl:EcolC_2432"/>
<dbReference type="HOGENOM" id="CLU_103257_0_0_6"/>
<dbReference type="GO" id="GO:0009279">
    <property type="term" value="C:cell outer membrane"/>
    <property type="evidence" value="ECO:0007669"/>
    <property type="project" value="UniProtKB-SubCell"/>
</dbReference>
<dbReference type="GO" id="GO:0008932">
    <property type="term" value="F:lytic endotransglycosylase activity"/>
    <property type="evidence" value="ECO:0007669"/>
    <property type="project" value="InterPro"/>
</dbReference>
<dbReference type="GO" id="GO:0016998">
    <property type="term" value="P:cell wall macromolecule catabolic process"/>
    <property type="evidence" value="ECO:0007669"/>
    <property type="project" value="UniProtKB-UniRule"/>
</dbReference>
<dbReference type="GO" id="GO:0071555">
    <property type="term" value="P:cell wall organization"/>
    <property type="evidence" value="ECO:0007669"/>
    <property type="project" value="UniProtKB-KW"/>
</dbReference>
<dbReference type="GO" id="GO:0000270">
    <property type="term" value="P:peptidoglycan metabolic process"/>
    <property type="evidence" value="ECO:0007669"/>
    <property type="project" value="InterPro"/>
</dbReference>
<dbReference type="CDD" id="cd16893">
    <property type="entry name" value="LT_MltC_MltE"/>
    <property type="match status" value="1"/>
</dbReference>
<dbReference type="FunFam" id="1.10.530.10:FF:000007">
    <property type="entry name" value="Endo-type membrane-bound lytic murein transglycosylase A"/>
    <property type="match status" value="1"/>
</dbReference>
<dbReference type="Gene3D" id="1.10.530.10">
    <property type="match status" value="1"/>
</dbReference>
<dbReference type="HAMAP" id="MF_01381">
    <property type="entry name" value="EmtA"/>
    <property type="match status" value="1"/>
</dbReference>
<dbReference type="InterPro" id="IPR023946">
    <property type="entry name" value="EmtA"/>
</dbReference>
<dbReference type="InterPro" id="IPR023346">
    <property type="entry name" value="Lysozyme-like_dom_sf"/>
</dbReference>
<dbReference type="InterPro" id="IPR000189">
    <property type="entry name" value="Transglyc_AS"/>
</dbReference>
<dbReference type="InterPro" id="IPR008258">
    <property type="entry name" value="Transglycosylase_SLT_dom_1"/>
</dbReference>
<dbReference type="NCBIfam" id="NF012014">
    <property type="entry name" value="PRK15470.1"/>
    <property type="match status" value="1"/>
</dbReference>
<dbReference type="PANTHER" id="PTHR37423:SF4">
    <property type="entry name" value="ENDO-TYPE MEMBRANE-BOUND LYTIC MUREIN TRANSGLYCOSYLASE A"/>
    <property type="match status" value="1"/>
</dbReference>
<dbReference type="PANTHER" id="PTHR37423">
    <property type="entry name" value="SOLUBLE LYTIC MUREIN TRANSGLYCOSYLASE-RELATED"/>
    <property type="match status" value="1"/>
</dbReference>
<dbReference type="Pfam" id="PF01464">
    <property type="entry name" value="SLT"/>
    <property type="match status" value="1"/>
</dbReference>
<dbReference type="SUPFAM" id="SSF53955">
    <property type="entry name" value="Lysozyme-like"/>
    <property type="match status" value="1"/>
</dbReference>
<dbReference type="PROSITE" id="PS51257">
    <property type="entry name" value="PROKAR_LIPOPROTEIN"/>
    <property type="match status" value="1"/>
</dbReference>
<dbReference type="PROSITE" id="PS00922">
    <property type="entry name" value="TRANSGLYCOSYLASE"/>
    <property type="match status" value="1"/>
</dbReference>
<gene>
    <name evidence="1" type="primary">emtA</name>
    <name type="ordered locus">EcolC_2432</name>
</gene>
<comment type="function">
    <text evidence="1">Murein-degrading enzyme. May play a role in recycling of muropeptides during cell elongation and/or cell division. Preferentially cleaves at a distance of more than two disaccharide units from the ends of the glycan chain.</text>
</comment>
<comment type="catalytic activity">
    <reaction evidence="1">
        <text>Endolytic cleavage of the (1-&gt;4)-beta-glycosidic linkage between N-acetylmuramic acid (MurNAc) and N-acetylglucosamine (GlcNAc) residues in peptidoglycan with concomitant formation of a 1,6-anhydrobond in the MurNAc residue.</text>
        <dbReference type="EC" id="4.2.2.n2"/>
    </reaction>
</comment>
<comment type="subcellular location">
    <subcellularLocation>
        <location evidence="1">Cell outer membrane</location>
        <topology evidence="1">Lipid-anchor</topology>
    </subcellularLocation>
</comment>
<comment type="similarity">
    <text evidence="1">Belongs to the transglycosylase Slt family.</text>
</comment>
<proteinExistence type="inferred from homology"/>
<name>EMTA_ECOLC</name>
<evidence type="ECO:0000255" key="1">
    <source>
        <dbReference type="HAMAP-Rule" id="MF_01381"/>
    </source>
</evidence>
<accession>B1IU99</accession>
<feature type="signal peptide" evidence="1">
    <location>
        <begin position="1"/>
        <end position="15"/>
    </location>
</feature>
<feature type="chain" id="PRO_1000087303" description="Endo-type membrane-bound lytic murein transglycosylase A">
    <location>
        <begin position="16"/>
        <end position="203"/>
    </location>
</feature>
<feature type="lipid moiety-binding region" description="N-palmitoyl cysteine" evidence="1">
    <location>
        <position position="16"/>
    </location>
</feature>
<feature type="lipid moiety-binding region" description="S-diacylglycerol cysteine" evidence="1">
    <location>
        <position position="16"/>
    </location>
</feature>
<reference key="1">
    <citation type="submission" date="2008-02" db="EMBL/GenBank/DDBJ databases">
        <title>Complete sequence of Escherichia coli C str. ATCC 8739.</title>
        <authorList>
            <person name="Copeland A."/>
            <person name="Lucas S."/>
            <person name="Lapidus A."/>
            <person name="Glavina del Rio T."/>
            <person name="Dalin E."/>
            <person name="Tice H."/>
            <person name="Bruce D."/>
            <person name="Goodwin L."/>
            <person name="Pitluck S."/>
            <person name="Kiss H."/>
            <person name="Brettin T."/>
            <person name="Detter J.C."/>
            <person name="Han C."/>
            <person name="Kuske C.R."/>
            <person name="Schmutz J."/>
            <person name="Larimer F."/>
            <person name="Land M."/>
            <person name="Hauser L."/>
            <person name="Kyrpides N."/>
            <person name="Mikhailova N."/>
            <person name="Ingram L."/>
            <person name="Richardson P."/>
        </authorList>
    </citation>
    <scope>NUCLEOTIDE SEQUENCE [LARGE SCALE GENOMIC DNA]</scope>
    <source>
        <strain>ATCC 8739 / DSM 1576 / NBRC 3972 / NCIMB 8545 / WDCM 00012 / Crooks</strain>
    </source>
</reference>
<organism>
    <name type="scientific">Escherichia coli (strain ATCC 8739 / DSM 1576 / NBRC 3972 / NCIMB 8545 / WDCM 00012 / Crooks)</name>
    <dbReference type="NCBI Taxonomy" id="481805"/>
    <lineage>
        <taxon>Bacteria</taxon>
        <taxon>Pseudomonadati</taxon>
        <taxon>Pseudomonadota</taxon>
        <taxon>Gammaproteobacteria</taxon>
        <taxon>Enterobacterales</taxon>
        <taxon>Enterobacteriaceae</taxon>
        <taxon>Escherichia</taxon>
    </lineage>
</organism>